<gene>
    <name evidence="1" type="primary">hutG</name>
    <name type="ordered locus">HCH_04170</name>
</gene>
<organism>
    <name type="scientific">Hahella chejuensis (strain KCTC 2396)</name>
    <dbReference type="NCBI Taxonomy" id="349521"/>
    <lineage>
        <taxon>Bacteria</taxon>
        <taxon>Pseudomonadati</taxon>
        <taxon>Pseudomonadota</taxon>
        <taxon>Gammaproteobacteria</taxon>
        <taxon>Oceanospirillales</taxon>
        <taxon>Hahellaceae</taxon>
        <taxon>Hahella</taxon>
    </lineage>
</organism>
<comment type="function">
    <text evidence="1">Catalyzes the conversion of N-formimidoyl-L-glutamate to L-glutamate and formamide.</text>
</comment>
<comment type="catalytic activity">
    <reaction evidence="1">
        <text>N-formimidoyl-L-glutamate + H2O = formamide + L-glutamate</text>
        <dbReference type="Rhea" id="RHEA:22492"/>
        <dbReference type="ChEBI" id="CHEBI:15377"/>
        <dbReference type="ChEBI" id="CHEBI:16397"/>
        <dbReference type="ChEBI" id="CHEBI:29985"/>
        <dbReference type="ChEBI" id="CHEBI:58928"/>
        <dbReference type="EC" id="3.5.3.8"/>
    </reaction>
</comment>
<comment type="cofactor">
    <cofactor evidence="1">
        <name>Mn(2+)</name>
        <dbReference type="ChEBI" id="CHEBI:29035"/>
    </cofactor>
    <text evidence="1">Binds 2 manganese ions per subunit.</text>
</comment>
<comment type="pathway">
    <text evidence="1">Amino-acid degradation; L-histidine degradation into L-glutamate; L-glutamate from N-formimidoyl-L-glutamate (hydrolase route): step 1/1.</text>
</comment>
<comment type="similarity">
    <text evidence="1">Belongs to the arginase family.</text>
</comment>
<dbReference type="EC" id="3.5.3.8" evidence="1"/>
<dbReference type="EMBL" id="CP000155">
    <property type="protein sequence ID" value="ABC30877.1"/>
    <property type="molecule type" value="Genomic_DNA"/>
</dbReference>
<dbReference type="SMR" id="Q2SEP7"/>
<dbReference type="STRING" id="349521.HCH_04170"/>
<dbReference type="KEGG" id="hch:HCH_04170"/>
<dbReference type="eggNOG" id="COG0010">
    <property type="taxonomic scope" value="Bacteria"/>
</dbReference>
<dbReference type="HOGENOM" id="CLU_039478_2_0_6"/>
<dbReference type="OrthoDB" id="9789727at2"/>
<dbReference type="UniPathway" id="UPA00379">
    <property type="reaction ID" value="UER00552"/>
</dbReference>
<dbReference type="Proteomes" id="UP000000238">
    <property type="component" value="Chromosome"/>
</dbReference>
<dbReference type="GO" id="GO:0008783">
    <property type="term" value="F:agmatinase activity"/>
    <property type="evidence" value="ECO:0007669"/>
    <property type="project" value="TreeGrafter"/>
</dbReference>
<dbReference type="GO" id="GO:0050415">
    <property type="term" value="F:formimidoylglutamase activity"/>
    <property type="evidence" value="ECO:0007669"/>
    <property type="project" value="UniProtKB-UniRule"/>
</dbReference>
<dbReference type="GO" id="GO:0030145">
    <property type="term" value="F:manganese ion binding"/>
    <property type="evidence" value="ECO:0007669"/>
    <property type="project" value="UniProtKB-UniRule"/>
</dbReference>
<dbReference type="GO" id="GO:0019556">
    <property type="term" value="P:L-histidine catabolic process to glutamate and formamide"/>
    <property type="evidence" value="ECO:0007669"/>
    <property type="project" value="UniProtKB-UniPathway"/>
</dbReference>
<dbReference type="GO" id="GO:0019557">
    <property type="term" value="P:L-histidine catabolic process to glutamate and formate"/>
    <property type="evidence" value="ECO:0007669"/>
    <property type="project" value="UniProtKB-UniPathway"/>
</dbReference>
<dbReference type="GO" id="GO:0033389">
    <property type="term" value="P:putrescine biosynthetic process from arginine, via agmatine"/>
    <property type="evidence" value="ECO:0007669"/>
    <property type="project" value="TreeGrafter"/>
</dbReference>
<dbReference type="CDD" id="cd09988">
    <property type="entry name" value="Formimidoylglutamase"/>
    <property type="match status" value="1"/>
</dbReference>
<dbReference type="Gene3D" id="3.40.800.10">
    <property type="entry name" value="Ureohydrolase domain"/>
    <property type="match status" value="1"/>
</dbReference>
<dbReference type="HAMAP" id="MF_00737">
    <property type="entry name" value="Formimidoylglutam"/>
    <property type="match status" value="1"/>
</dbReference>
<dbReference type="InterPro" id="IPR005923">
    <property type="entry name" value="HutG"/>
</dbReference>
<dbReference type="InterPro" id="IPR006035">
    <property type="entry name" value="Ureohydrolase"/>
</dbReference>
<dbReference type="InterPro" id="IPR023696">
    <property type="entry name" value="Ureohydrolase_dom_sf"/>
</dbReference>
<dbReference type="InterPro" id="IPR020855">
    <property type="entry name" value="Ureohydrolase_Mn_BS"/>
</dbReference>
<dbReference type="NCBIfam" id="TIGR01227">
    <property type="entry name" value="hutG"/>
    <property type="match status" value="1"/>
</dbReference>
<dbReference type="PANTHER" id="PTHR11358">
    <property type="entry name" value="ARGINASE/AGMATINASE"/>
    <property type="match status" value="1"/>
</dbReference>
<dbReference type="PANTHER" id="PTHR11358:SF35">
    <property type="entry name" value="FORMIMIDOYLGLUTAMASE"/>
    <property type="match status" value="1"/>
</dbReference>
<dbReference type="Pfam" id="PF00491">
    <property type="entry name" value="Arginase"/>
    <property type="match status" value="1"/>
</dbReference>
<dbReference type="PIRSF" id="PIRSF036979">
    <property type="entry name" value="Arginase"/>
    <property type="match status" value="1"/>
</dbReference>
<dbReference type="SUPFAM" id="SSF52768">
    <property type="entry name" value="Arginase/deacetylase"/>
    <property type="match status" value="1"/>
</dbReference>
<dbReference type="PROSITE" id="PS01053">
    <property type="entry name" value="ARGINASE_1"/>
    <property type="match status" value="1"/>
</dbReference>
<dbReference type="PROSITE" id="PS51409">
    <property type="entry name" value="ARGINASE_2"/>
    <property type="match status" value="1"/>
</dbReference>
<accession>Q2SEP7</accession>
<reference key="1">
    <citation type="journal article" date="2005" name="Nucleic Acids Res.">
        <title>Genomic blueprint of Hahella chejuensis, a marine microbe producing an algicidal agent.</title>
        <authorList>
            <person name="Jeong H."/>
            <person name="Yim J.H."/>
            <person name="Lee C."/>
            <person name="Choi S.-H."/>
            <person name="Park Y.K."/>
            <person name="Yoon S.H."/>
            <person name="Hur C.-G."/>
            <person name="Kang H.-Y."/>
            <person name="Kim D."/>
            <person name="Lee H.H."/>
            <person name="Park K.H."/>
            <person name="Park S.-H."/>
            <person name="Park H.-S."/>
            <person name="Lee H.K."/>
            <person name="Oh T.K."/>
            <person name="Kim J.F."/>
        </authorList>
    </citation>
    <scope>NUCLEOTIDE SEQUENCE [LARGE SCALE GENOMIC DNA]</scope>
    <source>
        <strain>KCTC 2396</strain>
    </source>
</reference>
<sequence>MEKFTMSETKVWSGRIDSADGPTAVRWHQQVRAPQEDSPAGVALIGYPCDLGVYINKGRVGAANGPDEIIKALANLPWRLTHPVYDCGNIQWEGELEDAQAALATKVFKQLQAGHSPIVLGGGHDVAWGSFQGLRRHLDQAAPDKVLGILNLDAHFDLRSDSEGASSGTPFQQIAKYCKTAGKPFHYAVFGISEYANTQALFDRADKLGVTYLKDTHCGYTQLGPMLRALDAFLSKVDCLYLTIDLDVLPAATAPGVSAPAAYGVPLEIVEAMLDAIQRKALPVLMADIAEYNPTYDIDSRTARVAARLAARLAGLLGKPTTKA</sequence>
<feature type="chain" id="PRO_0000258253" description="Formimidoylglutamase">
    <location>
        <begin position="1"/>
        <end position="324"/>
    </location>
</feature>
<feature type="binding site" evidence="1">
    <location>
        <position position="124"/>
    </location>
    <ligand>
        <name>Mn(2+)</name>
        <dbReference type="ChEBI" id="CHEBI:29035"/>
        <label>1</label>
    </ligand>
</feature>
<feature type="binding site" evidence="1">
    <location>
        <position position="153"/>
    </location>
    <ligand>
        <name>Mn(2+)</name>
        <dbReference type="ChEBI" id="CHEBI:29035"/>
        <label>1</label>
    </ligand>
</feature>
<feature type="binding site" evidence="1">
    <location>
        <position position="153"/>
    </location>
    <ligand>
        <name>Mn(2+)</name>
        <dbReference type="ChEBI" id="CHEBI:29035"/>
        <label>2</label>
    </ligand>
</feature>
<feature type="binding site" evidence="1">
    <location>
        <position position="155"/>
    </location>
    <ligand>
        <name>Mn(2+)</name>
        <dbReference type="ChEBI" id="CHEBI:29035"/>
        <label>2</label>
    </ligand>
</feature>
<feature type="binding site" evidence="1">
    <location>
        <position position="157"/>
    </location>
    <ligand>
        <name>Mn(2+)</name>
        <dbReference type="ChEBI" id="CHEBI:29035"/>
        <label>1</label>
    </ligand>
</feature>
<feature type="binding site" evidence="1">
    <location>
        <position position="245"/>
    </location>
    <ligand>
        <name>Mn(2+)</name>
        <dbReference type="ChEBI" id="CHEBI:29035"/>
        <label>1</label>
    </ligand>
</feature>
<feature type="binding site" evidence="1">
    <location>
        <position position="245"/>
    </location>
    <ligand>
        <name>Mn(2+)</name>
        <dbReference type="ChEBI" id="CHEBI:29035"/>
        <label>2</label>
    </ligand>
</feature>
<feature type="binding site" evidence="1">
    <location>
        <position position="247"/>
    </location>
    <ligand>
        <name>Mn(2+)</name>
        <dbReference type="ChEBI" id="CHEBI:29035"/>
        <label>2</label>
    </ligand>
</feature>
<proteinExistence type="inferred from homology"/>
<keyword id="KW-0369">Histidine metabolism</keyword>
<keyword id="KW-0378">Hydrolase</keyword>
<keyword id="KW-0464">Manganese</keyword>
<keyword id="KW-0479">Metal-binding</keyword>
<keyword id="KW-1185">Reference proteome</keyword>
<name>HUTG_HAHCH</name>
<evidence type="ECO:0000255" key="1">
    <source>
        <dbReference type="HAMAP-Rule" id="MF_00737"/>
    </source>
</evidence>
<protein>
    <recommendedName>
        <fullName evidence="1">Formimidoylglutamase</fullName>
        <ecNumber evidence="1">3.5.3.8</ecNumber>
    </recommendedName>
    <alternativeName>
        <fullName evidence="1">Formiminoglutamase</fullName>
    </alternativeName>
    <alternativeName>
        <fullName evidence="1">Formiminoglutamate hydrolase</fullName>
    </alternativeName>
</protein>